<reference key="1">
    <citation type="journal article" date="1994" name="Eur. J. Biochem.">
        <title>The bilin-binding protein of Pieris brassicae. cDNA sequence and regulation of expression reveal distinct features of this insect pigment protein.</title>
        <authorList>
            <person name="Schmidt F.S."/>
            <person name="Skerra A."/>
        </authorList>
    </citation>
    <scope>NUCLEOTIDE SEQUENCE [MRNA]</scope>
</reference>
<reference key="2">
    <citation type="journal article" date="1988" name="Biol. Chem. Hoppe-Seyler">
        <title>The complete amino-acid sequence of the bilin-binding protein from Pieris brassicae and its similarity to a family of serum transport proteins like the retinol-binding proteins.</title>
        <authorList>
            <person name="Suter F."/>
            <person name="Kayser H."/>
            <person name="Zuber H."/>
        </authorList>
    </citation>
    <scope>PROTEIN SEQUENCE OF 16-189</scope>
    <scope>DISULFIDE BONDS</scope>
    <scope>FUNCTION</scope>
    <scope>SUBCELLULAR LOCATION</scope>
</reference>
<reference key="3">
    <citation type="journal article" date="1987" name="J. Mol. Biol.">
        <title>Molecular structure of the bilin binding protein (BBP) from Pieris brassicae after refinement at 2.0-A resolution.</title>
        <authorList>
            <person name="Huber M."/>
            <person name="Schneider M."/>
            <person name="Mayr I."/>
            <person name="Mueller R."/>
            <person name="Deutzmann R."/>
            <person name="Suter F."/>
            <person name="Zuber H."/>
            <person name="Falk H."/>
            <person name="Kayser H."/>
        </authorList>
    </citation>
    <scope>X-RAY CRYSTALLOGRAPHY (2.0 ANGSTROMS)</scope>
    <scope>SUBUNIT</scope>
</reference>
<organism>
    <name type="scientific">Pieris brassicae</name>
    <name type="common">White butterfly</name>
    <name type="synonym">Large white butterfly</name>
    <dbReference type="NCBI Taxonomy" id="7116"/>
    <lineage>
        <taxon>Eukaryota</taxon>
        <taxon>Metazoa</taxon>
        <taxon>Ecdysozoa</taxon>
        <taxon>Arthropoda</taxon>
        <taxon>Hexapoda</taxon>
        <taxon>Insecta</taxon>
        <taxon>Pterygota</taxon>
        <taxon>Neoptera</taxon>
        <taxon>Endopterygota</taxon>
        <taxon>Lepidoptera</taxon>
        <taxon>Glossata</taxon>
        <taxon>Ditrysia</taxon>
        <taxon>Papilionoidea</taxon>
        <taxon>Pieridae</taxon>
        <taxon>Pierinae</taxon>
        <taxon>Pieris</taxon>
    </lineage>
</organism>
<feature type="signal peptide" evidence="1">
    <location>
        <begin position="1"/>
        <end position="15"/>
    </location>
</feature>
<feature type="chain" id="PRO_0000017880" description="Bilin-binding protein">
    <location>
        <begin position="16"/>
        <end position="189"/>
    </location>
</feature>
<feature type="disulfide bond" evidence="1">
    <location>
        <begin position="23"/>
        <end position="130"/>
    </location>
</feature>
<feature type="disulfide bond" evidence="1">
    <location>
        <begin position="57"/>
        <end position="185"/>
    </location>
</feature>
<feature type="strand" evidence="5">
    <location>
        <begin position="19"/>
        <end position="22"/>
    </location>
</feature>
<feature type="helix" evidence="5">
    <location>
        <begin position="34"/>
        <end position="36"/>
    </location>
</feature>
<feature type="strand" evidence="5">
    <location>
        <begin position="39"/>
        <end position="46"/>
    </location>
</feature>
<feature type="helix" evidence="5">
    <location>
        <begin position="48"/>
        <end position="54"/>
    </location>
</feature>
<feature type="strand" evidence="5">
    <location>
        <begin position="56"/>
        <end position="64"/>
    </location>
</feature>
<feature type="strand" evidence="5">
    <location>
        <begin position="66"/>
        <end position="77"/>
    </location>
</feature>
<feature type="strand" evidence="5">
    <location>
        <begin position="80"/>
        <end position="90"/>
    </location>
</feature>
<feature type="helix" evidence="5">
    <location>
        <begin position="94"/>
        <end position="96"/>
    </location>
</feature>
<feature type="strand" evidence="5">
    <location>
        <begin position="98"/>
        <end position="104"/>
    </location>
</feature>
<feature type="strand" evidence="5">
    <location>
        <begin position="110"/>
        <end position="119"/>
    </location>
</feature>
<feature type="strand" evidence="5">
    <location>
        <begin position="121"/>
        <end position="131"/>
    </location>
</feature>
<feature type="turn" evidence="6">
    <location>
        <begin position="134"/>
        <end position="136"/>
    </location>
</feature>
<feature type="strand" evidence="5">
    <location>
        <begin position="137"/>
        <end position="151"/>
    </location>
</feature>
<feature type="helix" evidence="5">
    <location>
        <begin position="154"/>
        <end position="163"/>
    </location>
</feature>
<feature type="helix" evidence="5">
    <location>
        <begin position="172"/>
        <end position="174"/>
    </location>
</feature>
<feature type="helix" evidence="4">
    <location>
        <begin position="182"/>
        <end position="185"/>
    </location>
</feature>
<dbReference type="EMBL" id="X76568">
    <property type="protein sequence ID" value="CAA54063.1"/>
    <property type="molecule type" value="mRNA"/>
</dbReference>
<dbReference type="PIR" id="S41410">
    <property type="entry name" value="S41410"/>
</dbReference>
<dbReference type="RefSeq" id="XP_045533206.1">
    <property type="nucleotide sequence ID" value="XM_045677250.1"/>
</dbReference>
<dbReference type="PDB" id="1BBP">
    <property type="method" value="X-ray"/>
    <property type="resolution" value="2.00 A"/>
    <property type="chains" value="A/B/C/D=16-188"/>
</dbReference>
<dbReference type="PDB" id="1KXO">
    <property type="method" value="X-ray"/>
    <property type="resolution" value="1.80 A"/>
    <property type="chains" value="A=16-189"/>
</dbReference>
<dbReference type="PDB" id="1LKE">
    <property type="method" value="X-ray"/>
    <property type="resolution" value="1.90 A"/>
    <property type="chains" value="A=16-189"/>
</dbReference>
<dbReference type="PDB" id="1LNM">
    <property type="method" value="X-ray"/>
    <property type="resolution" value="1.90 A"/>
    <property type="chains" value="A=16-189"/>
</dbReference>
<dbReference type="PDB" id="1N0S">
    <property type="method" value="X-ray"/>
    <property type="resolution" value="2.00 A"/>
    <property type="chains" value="A/B=16-189"/>
</dbReference>
<dbReference type="PDB" id="1T0V">
    <property type="method" value="NMR"/>
    <property type="chains" value="A=16-189"/>
</dbReference>
<dbReference type="PDBsum" id="1BBP"/>
<dbReference type="PDBsum" id="1KXO"/>
<dbReference type="PDBsum" id="1LKE"/>
<dbReference type="PDBsum" id="1LNM"/>
<dbReference type="PDBsum" id="1N0S"/>
<dbReference type="PDBsum" id="1T0V"/>
<dbReference type="SMR" id="P09464"/>
<dbReference type="GeneID" id="123720577"/>
<dbReference type="OrthoDB" id="565904at2759"/>
<dbReference type="EvolutionaryTrace" id="P09464"/>
<dbReference type="GO" id="GO:0005737">
    <property type="term" value="C:cytoplasm"/>
    <property type="evidence" value="ECO:0007669"/>
    <property type="project" value="TreeGrafter"/>
</dbReference>
<dbReference type="GO" id="GO:0005576">
    <property type="term" value="C:extracellular region"/>
    <property type="evidence" value="ECO:0007669"/>
    <property type="project" value="UniProtKB-SubCell"/>
</dbReference>
<dbReference type="GO" id="GO:0031409">
    <property type="term" value="F:pigment binding"/>
    <property type="evidence" value="ECO:0007669"/>
    <property type="project" value="UniProtKB-KW"/>
</dbReference>
<dbReference type="GO" id="GO:0006629">
    <property type="term" value="P:lipid metabolic process"/>
    <property type="evidence" value="ECO:0007669"/>
    <property type="project" value="TreeGrafter"/>
</dbReference>
<dbReference type="GO" id="GO:0000302">
    <property type="term" value="P:response to reactive oxygen species"/>
    <property type="evidence" value="ECO:0007669"/>
    <property type="project" value="TreeGrafter"/>
</dbReference>
<dbReference type="Gene3D" id="2.40.128.20">
    <property type="match status" value="1"/>
</dbReference>
<dbReference type="InterPro" id="IPR012674">
    <property type="entry name" value="Calycin"/>
</dbReference>
<dbReference type="InterPro" id="IPR003057">
    <property type="entry name" value="Invtbrt_color"/>
</dbReference>
<dbReference type="InterPro" id="IPR022271">
    <property type="entry name" value="Lipocalin_ApoD"/>
</dbReference>
<dbReference type="InterPro" id="IPR022272">
    <property type="entry name" value="Lipocalin_CS"/>
</dbReference>
<dbReference type="InterPro" id="IPR000566">
    <property type="entry name" value="Lipocln_cytosolic_FA-bd_dom"/>
</dbReference>
<dbReference type="PANTHER" id="PTHR10612">
    <property type="entry name" value="APOLIPOPROTEIN D"/>
    <property type="match status" value="1"/>
</dbReference>
<dbReference type="PANTHER" id="PTHR10612:SF34">
    <property type="entry name" value="APOLIPOPROTEIN D"/>
    <property type="match status" value="1"/>
</dbReference>
<dbReference type="Pfam" id="PF00061">
    <property type="entry name" value="Lipocalin"/>
    <property type="match status" value="1"/>
</dbReference>
<dbReference type="PIRSF" id="PIRSF036893">
    <property type="entry name" value="Lipocalin_ApoD"/>
    <property type="match status" value="1"/>
</dbReference>
<dbReference type="PRINTS" id="PR01273">
    <property type="entry name" value="INVTBRTCOLOR"/>
</dbReference>
<dbReference type="SUPFAM" id="SSF50814">
    <property type="entry name" value="Lipocalins"/>
    <property type="match status" value="1"/>
</dbReference>
<dbReference type="PROSITE" id="PS00213">
    <property type="entry name" value="LIPOCALIN"/>
    <property type="match status" value="1"/>
</dbReference>
<name>BBP_PIEBR</name>
<proteinExistence type="evidence at protein level"/>
<comment type="function">
    <text evidence="1">This protein binds the blue pigments bilins.</text>
</comment>
<comment type="subunit">
    <text evidence="2">Homotetramer.</text>
</comment>
<comment type="subcellular location">
    <subcellularLocation>
        <location evidence="1">Secreted</location>
    </subcellularLocation>
</comment>
<comment type="tissue specificity">
    <text>Hemolymph.</text>
</comment>
<comment type="similarity">
    <text evidence="3">Belongs to the calycin superfamily. Lipocalin family.</text>
</comment>
<keyword id="KW-0002">3D-structure</keyword>
<keyword id="KW-0089">Bile pigment</keyword>
<keyword id="KW-0157">Chromophore</keyword>
<keyword id="KW-0903">Direct protein sequencing</keyword>
<keyword id="KW-1015">Disulfide bond</keyword>
<keyword id="KW-0608">Pigment</keyword>
<keyword id="KW-0964">Secreted</keyword>
<keyword id="KW-0732">Signal</keyword>
<protein>
    <recommendedName>
        <fullName>Bilin-binding protein</fullName>
        <shortName>BBP</shortName>
    </recommendedName>
</protein>
<sequence>MQYLIVLALVAAASANVYHDGACPEVKPVDNFDWSNYHGKWWEVAKYPNSVEKYGKCGWAEYTPEGKSVKVSNYHVIHGKEYFIEGTAYPVGDSKIGKIYHKLTYGGVTKENVFNVLSTDNKNYIIGYYCKYDEDKKGHQDFVWVLSRSKVLTGEAKTAVENYLIGSPVVDSQKLVYSDFSEAACKVNN</sequence>
<accession>P09464</accession>
<evidence type="ECO:0000269" key="1">
    <source>
    </source>
</evidence>
<evidence type="ECO:0000269" key="2">
    <source>
    </source>
</evidence>
<evidence type="ECO:0000305" key="3"/>
<evidence type="ECO:0007829" key="4">
    <source>
        <dbReference type="PDB" id="1BBP"/>
    </source>
</evidence>
<evidence type="ECO:0007829" key="5">
    <source>
        <dbReference type="PDB" id="1KXO"/>
    </source>
</evidence>
<evidence type="ECO:0007829" key="6">
    <source>
        <dbReference type="PDB" id="1T0V"/>
    </source>
</evidence>